<sequence length="76" mass="8167">MGGLSIWHWLIVLLIVALVFGTKKLRNIGNDLGSAVKGFKDGMKEGETPADAQQLPRTGTVDVNAKETTRSDSNKA</sequence>
<accession>A4JAX4</accession>
<keyword id="KW-0997">Cell inner membrane</keyword>
<keyword id="KW-1003">Cell membrane</keyword>
<keyword id="KW-0472">Membrane</keyword>
<keyword id="KW-0653">Protein transport</keyword>
<keyword id="KW-0811">Translocation</keyword>
<keyword id="KW-0812">Transmembrane</keyword>
<keyword id="KW-1133">Transmembrane helix</keyword>
<keyword id="KW-0813">Transport</keyword>
<proteinExistence type="inferred from homology"/>
<organism>
    <name type="scientific">Burkholderia vietnamiensis (strain G4 / LMG 22486)</name>
    <name type="common">Burkholderia cepacia (strain R1808)</name>
    <dbReference type="NCBI Taxonomy" id="269482"/>
    <lineage>
        <taxon>Bacteria</taxon>
        <taxon>Pseudomonadati</taxon>
        <taxon>Pseudomonadota</taxon>
        <taxon>Betaproteobacteria</taxon>
        <taxon>Burkholderiales</taxon>
        <taxon>Burkholderiaceae</taxon>
        <taxon>Burkholderia</taxon>
        <taxon>Burkholderia cepacia complex</taxon>
    </lineage>
</organism>
<comment type="function">
    <text evidence="1">Part of the twin-arginine translocation (Tat) system that transports large folded proteins containing a characteristic twin-arginine motif in their signal peptide across membranes. TatA could form the protein-conducting channel of the Tat system.</text>
</comment>
<comment type="subunit">
    <text evidence="1">The Tat system comprises two distinct complexes: a TatABC complex, containing multiple copies of TatA, TatB and TatC subunits, and a separate TatA complex, containing only TatA subunits. Substrates initially bind to the TatABC complex, which probably triggers association of the separate TatA complex to form the active translocon.</text>
</comment>
<comment type="subcellular location">
    <subcellularLocation>
        <location evidence="1">Cell inner membrane</location>
        <topology evidence="1">Single-pass membrane protein</topology>
    </subcellularLocation>
</comment>
<comment type="similarity">
    <text evidence="1">Belongs to the TatA/E family.</text>
</comment>
<evidence type="ECO:0000255" key="1">
    <source>
        <dbReference type="HAMAP-Rule" id="MF_00236"/>
    </source>
</evidence>
<evidence type="ECO:0000256" key="2">
    <source>
        <dbReference type="SAM" id="MobiDB-lite"/>
    </source>
</evidence>
<reference key="1">
    <citation type="submission" date="2007-03" db="EMBL/GenBank/DDBJ databases">
        <title>Complete sequence of chromosome 1 of Burkholderia vietnamiensis G4.</title>
        <authorList>
            <consortium name="US DOE Joint Genome Institute"/>
            <person name="Copeland A."/>
            <person name="Lucas S."/>
            <person name="Lapidus A."/>
            <person name="Barry K."/>
            <person name="Detter J.C."/>
            <person name="Glavina del Rio T."/>
            <person name="Hammon N."/>
            <person name="Israni S."/>
            <person name="Dalin E."/>
            <person name="Tice H."/>
            <person name="Pitluck S."/>
            <person name="Chain P."/>
            <person name="Malfatti S."/>
            <person name="Shin M."/>
            <person name="Vergez L."/>
            <person name="Schmutz J."/>
            <person name="Larimer F."/>
            <person name="Land M."/>
            <person name="Hauser L."/>
            <person name="Kyrpides N."/>
            <person name="Tiedje J."/>
            <person name="Richardson P."/>
        </authorList>
    </citation>
    <scope>NUCLEOTIDE SEQUENCE [LARGE SCALE GENOMIC DNA]</scope>
    <source>
        <strain>G4 / LMG 22486</strain>
    </source>
</reference>
<feature type="chain" id="PRO_1000044374" description="Sec-independent protein translocase protein TatA">
    <location>
        <begin position="1"/>
        <end position="76"/>
    </location>
</feature>
<feature type="transmembrane region" description="Helical" evidence="1">
    <location>
        <begin position="1"/>
        <end position="21"/>
    </location>
</feature>
<feature type="region of interest" description="Disordered" evidence="2">
    <location>
        <begin position="40"/>
        <end position="76"/>
    </location>
</feature>
<feature type="compositionally biased region" description="Basic and acidic residues" evidence="2">
    <location>
        <begin position="64"/>
        <end position="76"/>
    </location>
</feature>
<protein>
    <recommendedName>
        <fullName evidence="1">Sec-independent protein translocase protein TatA</fullName>
    </recommendedName>
</protein>
<dbReference type="EMBL" id="CP000614">
    <property type="protein sequence ID" value="ABO53427.1"/>
    <property type="molecule type" value="Genomic_DNA"/>
</dbReference>
<dbReference type="SMR" id="A4JAX4"/>
<dbReference type="KEGG" id="bvi:Bcep1808_0415"/>
<dbReference type="eggNOG" id="COG1826">
    <property type="taxonomic scope" value="Bacteria"/>
</dbReference>
<dbReference type="HOGENOM" id="CLU_086034_5_3_4"/>
<dbReference type="Proteomes" id="UP000002287">
    <property type="component" value="Chromosome 1"/>
</dbReference>
<dbReference type="GO" id="GO:0033281">
    <property type="term" value="C:TAT protein transport complex"/>
    <property type="evidence" value="ECO:0007669"/>
    <property type="project" value="UniProtKB-UniRule"/>
</dbReference>
<dbReference type="GO" id="GO:0008320">
    <property type="term" value="F:protein transmembrane transporter activity"/>
    <property type="evidence" value="ECO:0007669"/>
    <property type="project" value="UniProtKB-UniRule"/>
</dbReference>
<dbReference type="GO" id="GO:0043953">
    <property type="term" value="P:protein transport by the Tat complex"/>
    <property type="evidence" value="ECO:0007669"/>
    <property type="project" value="UniProtKB-UniRule"/>
</dbReference>
<dbReference type="Gene3D" id="1.20.5.3310">
    <property type="match status" value="1"/>
</dbReference>
<dbReference type="HAMAP" id="MF_00236">
    <property type="entry name" value="TatA_E"/>
    <property type="match status" value="1"/>
</dbReference>
<dbReference type="InterPro" id="IPR003369">
    <property type="entry name" value="TatA/B/E"/>
</dbReference>
<dbReference type="InterPro" id="IPR006312">
    <property type="entry name" value="TatA/E"/>
</dbReference>
<dbReference type="NCBIfam" id="NF002813">
    <property type="entry name" value="PRK02958.1"/>
    <property type="match status" value="1"/>
</dbReference>
<dbReference type="NCBIfam" id="TIGR01411">
    <property type="entry name" value="tatAE"/>
    <property type="match status" value="1"/>
</dbReference>
<dbReference type="PANTHER" id="PTHR42982">
    <property type="entry name" value="SEC-INDEPENDENT PROTEIN TRANSLOCASE PROTEIN TATA"/>
    <property type="match status" value="1"/>
</dbReference>
<dbReference type="PANTHER" id="PTHR42982:SF1">
    <property type="entry name" value="SEC-INDEPENDENT PROTEIN TRANSLOCASE PROTEIN TATA"/>
    <property type="match status" value="1"/>
</dbReference>
<dbReference type="Pfam" id="PF02416">
    <property type="entry name" value="TatA_B_E"/>
    <property type="match status" value="1"/>
</dbReference>
<gene>
    <name evidence="1" type="primary">tatA</name>
    <name type="ordered locus">Bcep1808_0415</name>
</gene>
<name>TATA_BURVG</name>